<gene>
    <name type="primary">FAM181A</name>
    <name type="synonym">C14orf152</name>
    <name type="ORF">HSD-31</name>
    <name type="ORF">HSD31</name>
</gene>
<sequence>MPLEERRSSGERNDAAPTNHRRPGEKRASTAKQVSSVPFLGAAGHQQSLPSSWKASCSGPLVMASDSDVKMLLNFVNLASSDIKAALDKSAPCRRSVDHRKYLQKQLKRFSQKYSRLPRGLPGRAAEPYLKRGSEDRPRRLLLDLGPDSSPGGGGGCKEKVLRNPYREECLAKEQLPQRQHPEAAQPGQVPMRKRQLPASFWEEPRPTHSYHVGLEGGLGPREGPPYEGKKNCKGLEPLGPETTLVSMSPRALAEKEPLKMPGVSLVGRVNAWSCCPFQYHGQPIYPGPLGALPQSPVPSLGLWRKSPAFPGELAHLCKDVDGLGQKVCRPVVLKPIPTKPAVPPPIFNVFGYL</sequence>
<dbReference type="EMBL" id="AY255795">
    <property type="protein sequence ID" value="AAP15252.1"/>
    <property type="molecule type" value="mRNA"/>
</dbReference>
<dbReference type="EMBL" id="AK093387">
    <property type="protein sequence ID" value="BAC04151.1"/>
    <property type="molecule type" value="mRNA"/>
</dbReference>
<dbReference type="EMBL" id="AK315393">
    <property type="protein sequence ID" value="BAG37786.1"/>
    <property type="molecule type" value="mRNA"/>
</dbReference>
<dbReference type="EMBL" id="AL132642">
    <property type="status" value="NOT_ANNOTATED_CDS"/>
    <property type="molecule type" value="Genomic_DNA"/>
</dbReference>
<dbReference type="EMBL" id="BC009073">
    <property type="protein sequence ID" value="AAH09073.1"/>
    <property type="molecule type" value="mRNA"/>
</dbReference>
<dbReference type="CCDS" id="CCDS55939.1">
    <molecule id="Q8N9Y4-2"/>
</dbReference>
<dbReference type="CCDS" id="CCDS9914.1">
    <molecule id="Q8N9Y4-1"/>
</dbReference>
<dbReference type="RefSeq" id="NP_001194000.1">
    <molecule id="Q8N9Y4-2"/>
    <property type="nucleotide sequence ID" value="NM_001207071.2"/>
</dbReference>
<dbReference type="RefSeq" id="NP_001194001.1">
    <molecule id="Q8N9Y4-2"/>
    <property type="nucleotide sequence ID" value="NM_001207072.2"/>
</dbReference>
<dbReference type="RefSeq" id="NP_001194002.1">
    <molecule id="Q8N9Y4-2"/>
    <property type="nucleotide sequence ID" value="NM_001207073.2"/>
</dbReference>
<dbReference type="RefSeq" id="NP_001194003.1">
    <molecule id="Q8N9Y4-2"/>
    <property type="nucleotide sequence ID" value="NM_001207074.2"/>
</dbReference>
<dbReference type="RefSeq" id="NP_612353.3">
    <molecule id="Q8N9Y4-1"/>
    <property type="nucleotide sequence ID" value="NM_138344.4"/>
</dbReference>
<dbReference type="PDB" id="6L9F">
    <property type="method" value="X-ray"/>
    <property type="resolution" value="2.56 A"/>
    <property type="chains" value="C/D=187-206"/>
</dbReference>
<dbReference type="PDB" id="6SEN">
    <property type="method" value="X-ray"/>
    <property type="resolution" value="1.65 A"/>
    <property type="chains" value="L/M=190-205"/>
</dbReference>
<dbReference type="PDBsum" id="6L9F"/>
<dbReference type="PDBsum" id="6SEN"/>
<dbReference type="SMR" id="Q8N9Y4"/>
<dbReference type="BioGRID" id="124657">
    <property type="interactions" value="6"/>
</dbReference>
<dbReference type="FunCoup" id="Q8N9Y4">
    <property type="interactions" value="155"/>
</dbReference>
<dbReference type="IntAct" id="Q8N9Y4">
    <property type="interactions" value="3"/>
</dbReference>
<dbReference type="STRING" id="9606.ENSP00000267594"/>
<dbReference type="iPTMnet" id="Q8N9Y4"/>
<dbReference type="PhosphoSitePlus" id="Q8N9Y4"/>
<dbReference type="BioMuta" id="FAM181A"/>
<dbReference type="DMDM" id="152032205"/>
<dbReference type="MassIVE" id="Q8N9Y4"/>
<dbReference type="PaxDb" id="9606-ENSP00000267594"/>
<dbReference type="PeptideAtlas" id="Q8N9Y4"/>
<dbReference type="ProteomicsDB" id="72608">
    <molecule id="Q8N9Y4-1"/>
</dbReference>
<dbReference type="ProteomicsDB" id="72609">
    <molecule id="Q8N9Y4-2"/>
</dbReference>
<dbReference type="Antibodypedia" id="48">
    <property type="antibodies" value="10 antibodies from 8 providers"/>
</dbReference>
<dbReference type="DNASU" id="90050"/>
<dbReference type="Ensembl" id="ENST00000267594.5">
    <molecule id="Q8N9Y4-1"/>
    <property type="protein sequence ID" value="ENSP00000267594.5"/>
    <property type="gene ID" value="ENSG00000140067.7"/>
</dbReference>
<dbReference type="Ensembl" id="ENST00000556222.2">
    <molecule id="Q8N9Y4-2"/>
    <property type="protein sequence ID" value="ENSP00000451678.1"/>
    <property type="gene ID" value="ENSG00000140067.7"/>
</dbReference>
<dbReference type="Ensembl" id="ENST00000557000.2">
    <molecule id="Q8N9Y4-2"/>
    <property type="protein sequence ID" value="ENSP00000451445.2"/>
    <property type="gene ID" value="ENSG00000140067.7"/>
</dbReference>
<dbReference type="Ensembl" id="ENST00000557719.1">
    <molecule id="Q8N9Y4-2"/>
    <property type="protein sequence ID" value="ENSP00000451802.1"/>
    <property type="gene ID" value="ENSG00000140067.7"/>
</dbReference>
<dbReference type="Ensembl" id="ENST00000611800.2">
    <molecule id="Q8N9Y4-2"/>
    <property type="protein sequence ID" value="ENSP00000478780.1"/>
    <property type="gene ID" value="ENSG00000273533.3"/>
</dbReference>
<dbReference type="Ensembl" id="ENST00000617881.3">
    <molecule id="Q8N9Y4-1"/>
    <property type="protein sequence ID" value="ENSP00000479410.1"/>
    <property type="gene ID" value="ENSG00000273533.3"/>
</dbReference>
<dbReference type="Ensembl" id="ENST00000620448.3">
    <molecule id="Q8N9Y4-2"/>
    <property type="protein sequence ID" value="ENSP00000478207.1"/>
    <property type="gene ID" value="ENSG00000273533.3"/>
</dbReference>
<dbReference type="Ensembl" id="ENST00000626058.1">
    <molecule id="Q8N9Y4-2"/>
    <property type="protein sequence ID" value="ENSP00000486422.1"/>
    <property type="gene ID" value="ENSG00000273533.3"/>
</dbReference>
<dbReference type="GeneID" id="90050"/>
<dbReference type="KEGG" id="hsa:90050"/>
<dbReference type="MANE-Select" id="ENST00000556222.2">
    <molecule id="Q8N9Y4-2"/>
    <property type="protein sequence ID" value="ENSP00000451678.1"/>
    <property type="RefSeq nucleotide sequence ID" value="NM_001207073.2"/>
    <property type="RefSeq protein sequence ID" value="NP_001194002.1"/>
</dbReference>
<dbReference type="UCSC" id="uc001ybz.3">
    <molecule id="Q8N9Y4-1"/>
    <property type="organism name" value="human"/>
</dbReference>
<dbReference type="AGR" id="HGNC:20491"/>
<dbReference type="CTD" id="90050"/>
<dbReference type="DisGeNET" id="90050"/>
<dbReference type="GeneCards" id="FAM181A"/>
<dbReference type="HGNC" id="HGNC:20491">
    <property type="gene designation" value="FAM181A"/>
</dbReference>
<dbReference type="HPA" id="ENSG00000140067">
    <property type="expression patterns" value="Group enriched (brain, testis)"/>
</dbReference>
<dbReference type="neXtProt" id="NX_Q8N9Y4"/>
<dbReference type="OpenTargets" id="ENSG00000140067"/>
<dbReference type="PharmGKB" id="PA162387582"/>
<dbReference type="VEuPathDB" id="HostDB:ENSG00000140067"/>
<dbReference type="eggNOG" id="ENOG502RZWV">
    <property type="taxonomic scope" value="Eukaryota"/>
</dbReference>
<dbReference type="GeneTree" id="ENSGT00940000154730"/>
<dbReference type="HOGENOM" id="CLU_060757_0_0_1"/>
<dbReference type="InParanoid" id="Q8N9Y4"/>
<dbReference type="OMA" id="CKDVDGP"/>
<dbReference type="OrthoDB" id="5982901at2759"/>
<dbReference type="PAN-GO" id="Q8N9Y4">
    <property type="GO annotations" value="0 GO annotations based on evolutionary models"/>
</dbReference>
<dbReference type="PhylomeDB" id="Q8N9Y4"/>
<dbReference type="TreeFam" id="TF333276"/>
<dbReference type="PathwayCommons" id="Q8N9Y4"/>
<dbReference type="BioGRID-ORCS" id="90050">
    <property type="hits" value="17 hits in 1148 CRISPR screens"/>
</dbReference>
<dbReference type="GenomeRNAi" id="90050"/>
<dbReference type="Pharos" id="Q8N9Y4">
    <property type="development level" value="Tdark"/>
</dbReference>
<dbReference type="PRO" id="PR:Q8N9Y4"/>
<dbReference type="Proteomes" id="UP000005640">
    <property type="component" value="Chromosome 14"/>
</dbReference>
<dbReference type="RNAct" id="Q8N9Y4">
    <property type="molecule type" value="protein"/>
</dbReference>
<dbReference type="Bgee" id="ENSG00000140067">
    <property type="expression patterns" value="Expressed in left testis and 61 other cell types or tissues"/>
</dbReference>
<dbReference type="ExpressionAtlas" id="Q8N9Y4">
    <property type="expression patterns" value="baseline and differential"/>
</dbReference>
<dbReference type="GO" id="GO:0005737">
    <property type="term" value="C:cytoplasm"/>
    <property type="evidence" value="ECO:0000314"/>
    <property type="project" value="UniProtKB"/>
</dbReference>
<dbReference type="Gene3D" id="6.20.430.10">
    <property type="match status" value="1"/>
</dbReference>
<dbReference type="InterPro" id="IPR029359">
    <property type="entry name" value="FAM181"/>
</dbReference>
<dbReference type="InterPro" id="IPR053819">
    <property type="entry name" value="TEADIR3_omega_loop"/>
</dbReference>
<dbReference type="PANTHER" id="PTHR33766:SF1">
    <property type="entry name" value="PROTEIN FAM181A"/>
    <property type="match status" value="1"/>
</dbReference>
<dbReference type="PANTHER" id="PTHR33766">
    <property type="entry name" value="PROTEIN FAM181B"/>
    <property type="match status" value="1"/>
</dbReference>
<dbReference type="Pfam" id="PF15238">
    <property type="entry name" value="TEADIR3"/>
    <property type="match status" value="1"/>
</dbReference>
<proteinExistence type="evidence at protein level"/>
<accession>Q8N9Y4</accession>
<accession>B2RD39</accession>
<accession>Q96GY1</accession>
<keyword id="KW-0002">3D-structure</keyword>
<keyword id="KW-0025">Alternative splicing</keyword>
<keyword id="KW-1267">Proteomics identification</keyword>
<keyword id="KW-1185">Reference proteome</keyword>
<evidence type="ECO:0000256" key="1">
    <source>
        <dbReference type="SAM" id="MobiDB-lite"/>
    </source>
</evidence>
<evidence type="ECO:0000269" key="2">
    <source>
    </source>
</evidence>
<evidence type="ECO:0000303" key="3">
    <source>
    </source>
</evidence>
<evidence type="ECO:0000303" key="4">
    <source>
    </source>
</evidence>
<evidence type="ECO:0000303" key="5">
    <source ref="1"/>
</evidence>
<evidence type="ECO:0000305" key="6"/>
<evidence type="ECO:0007829" key="7">
    <source>
        <dbReference type="PDB" id="6SEN"/>
    </source>
</evidence>
<name>F181A_HUMAN</name>
<comment type="alternative products">
    <event type="alternative splicing"/>
    <isoform>
        <id>Q8N9Y4-1</id>
        <name>1</name>
        <sequence type="displayed"/>
    </isoform>
    <isoform>
        <id>Q8N9Y4-2</id>
        <name>2</name>
        <sequence type="described" ref="VSP_014549"/>
    </isoform>
</comment>
<comment type="similarity">
    <text evidence="6">Belongs to the FAM181 family.</text>
</comment>
<protein>
    <recommendedName>
        <fullName>Protein FAM181A</fullName>
    </recommendedName>
</protein>
<organism>
    <name type="scientific">Homo sapiens</name>
    <name type="common">Human</name>
    <dbReference type="NCBI Taxonomy" id="9606"/>
    <lineage>
        <taxon>Eukaryota</taxon>
        <taxon>Metazoa</taxon>
        <taxon>Chordata</taxon>
        <taxon>Craniata</taxon>
        <taxon>Vertebrata</taxon>
        <taxon>Euteleostomi</taxon>
        <taxon>Mammalia</taxon>
        <taxon>Eutheria</taxon>
        <taxon>Euarchontoglires</taxon>
        <taxon>Primates</taxon>
        <taxon>Haplorrhini</taxon>
        <taxon>Catarrhini</taxon>
        <taxon>Hominidae</taxon>
        <taxon>Homo</taxon>
    </lineage>
</organism>
<reference key="1">
    <citation type="submission" date="2003-03" db="EMBL/GenBank/DDBJ databases">
        <title>A new spermatogenesis-related gene.</title>
        <authorList>
            <person name="Yang C.B."/>
            <person name="Miao S.Y."/>
            <person name="Zhang X.D."/>
            <person name="Qiao Y."/>
            <person name="Liang G."/>
            <person name="Wang L.F."/>
        </authorList>
    </citation>
    <scope>NUCLEOTIDE SEQUENCE [LARGE SCALE MRNA] (ISOFORM 2)</scope>
    <source>
        <tissue>Testis</tissue>
    </source>
</reference>
<reference key="2">
    <citation type="journal article" date="2004" name="Nat. Genet.">
        <title>Complete sequencing and characterization of 21,243 full-length human cDNAs.</title>
        <authorList>
            <person name="Ota T."/>
            <person name="Suzuki Y."/>
            <person name="Nishikawa T."/>
            <person name="Otsuki T."/>
            <person name="Sugiyama T."/>
            <person name="Irie R."/>
            <person name="Wakamatsu A."/>
            <person name="Hayashi K."/>
            <person name="Sato H."/>
            <person name="Nagai K."/>
            <person name="Kimura K."/>
            <person name="Makita H."/>
            <person name="Sekine M."/>
            <person name="Obayashi M."/>
            <person name="Nishi T."/>
            <person name="Shibahara T."/>
            <person name="Tanaka T."/>
            <person name="Ishii S."/>
            <person name="Yamamoto J."/>
            <person name="Saito K."/>
            <person name="Kawai Y."/>
            <person name="Isono Y."/>
            <person name="Nakamura Y."/>
            <person name="Nagahari K."/>
            <person name="Murakami K."/>
            <person name="Yasuda T."/>
            <person name="Iwayanagi T."/>
            <person name="Wagatsuma M."/>
            <person name="Shiratori A."/>
            <person name="Sudo H."/>
            <person name="Hosoiri T."/>
            <person name="Kaku Y."/>
            <person name="Kodaira H."/>
            <person name="Kondo H."/>
            <person name="Sugawara M."/>
            <person name="Takahashi M."/>
            <person name="Kanda K."/>
            <person name="Yokoi T."/>
            <person name="Furuya T."/>
            <person name="Kikkawa E."/>
            <person name="Omura Y."/>
            <person name="Abe K."/>
            <person name="Kamihara K."/>
            <person name="Katsuta N."/>
            <person name="Sato K."/>
            <person name="Tanikawa M."/>
            <person name="Yamazaki M."/>
            <person name="Ninomiya K."/>
            <person name="Ishibashi T."/>
            <person name="Yamashita H."/>
            <person name="Murakawa K."/>
            <person name="Fujimori K."/>
            <person name="Tanai H."/>
            <person name="Kimata M."/>
            <person name="Watanabe M."/>
            <person name="Hiraoka S."/>
            <person name="Chiba Y."/>
            <person name="Ishida S."/>
            <person name="Ono Y."/>
            <person name="Takiguchi S."/>
            <person name="Watanabe S."/>
            <person name="Yosida M."/>
            <person name="Hotuta T."/>
            <person name="Kusano J."/>
            <person name="Kanehori K."/>
            <person name="Takahashi-Fujii A."/>
            <person name="Hara H."/>
            <person name="Tanase T.-O."/>
            <person name="Nomura Y."/>
            <person name="Togiya S."/>
            <person name="Komai F."/>
            <person name="Hara R."/>
            <person name="Takeuchi K."/>
            <person name="Arita M."/>
            <person name="Imose N."/>
            <person name="Musashino K."/>
            <person name="Yuuki H."/>
            <person name="Oshima A."/>
            <person name="Sasaki N."/>
            <person name="Aotsuka S."/>
            <person name="Yoshikawa Y."/>
            <person name="Matsunawa H."/>
            <person name="Ichihara T."/>
            <person name="Shiohata N."/>
            <person name="Sano S."/>
            <person name="Moriya S."/>
            <person name="Momiyama H."/>
            <person name="Satoh N."/>
            <person name="Takami S."/>
            <person name="Terashima Y."/>
            <person name="Suzuki O."/>
            <person name="Nakagawa S."/>
            <person name="Senoh A."/>
            <person name="Mizoguchi H."/>
            <person name="Goto Y."/>
            <person name="Shimizu F."/>
            <person name="Wakebe H."/>
            <person name="Hishigaki H."/>
            <person name="Watanabe T."/>
            <person name="Sugiyama A."/>
            <person name="Takemoto M."/>
            <person name="Kawakami B."/>
            <person name="Yamazaki M."/>
            <person name="Watanabe K."/>
            <person name="Kumagai A."/>
            <person name="Itakura S."/>
            <person name="Fukuzumi Y."/>
            <person name="Fujimori Y."/>
            <person name="Komiyama M."/>
            <person name="Tashiro H."/>
            <person name="Tanigami A."/>
            <person name="Fujiwara T."/>
            <person name="Ono T."/>
            <person name="Yamada K."/>
            <person name="Fujii Y."/>
            <person name="Ozaki K."/>
            <person name="Hirao M."/>
            <person name="Ohmori Y."/>
            <person name="Kawabata A."/>
            <person name="Hikiji T."/>
            <person name="Kobatake N."/>
            <person name="Inagaki H."/>
            <person name="Ikema Y."/>
            <person name="Okamoto S."/>
            <person name="Okitani R."/>
            <person name="Kawakami T."/>
            <person name="Noguchi S."/>
            <person name="Itoh T."/>
            <person name="Shigeta K."/>
            <person name="Senba T."/>
            <person name="Matsumura K."/>
            <person name="Nakajima Y."/>
            <person name="Mizuno T."/>
            <person name="Morinaga M."/>
            <person name="Sasaki M."/>
            <person name="Togashi T."/>
            <person name="Oyama M."/>
            <person name="Hata H."/>
            <person name="Watanabe M."/>
            <person name="Komatsu T."/>
            <person name="Mizushima-Sugano J."/>
            <person name="Satoh T."/>
            <person name="Shirai Y."/>
            <person name="Takahashi Y."/>
            <person name="Nakagawa K."/>
            <person name="Okumura K."/>
            <person name="Nagase T."/>
            <person name="Nomura N."/>
            <person name="Kikuchi H."/>
            <person name="Masuho Y."/>
            <person name="Yamashita R."/>
            <person name="Nakai K."/>
            <person name="Yada T."/>
            <person name="Nakamura Y."/>
            <person name="Ohara O."/>
            <person name="Isogai T."/>
            <person name="Sugano S."/>
        </authorList>
    </citation>
    <scope>NUCLEOTIDE SEQUENCE [LARGE SCALE MRNA] (ISOFORMS 1 AND 2)</scope>
    <scope>VARIANT THR-28</scope>
    <source>
        <tissue>Hippocampus</tissue>
        <tissue>Testis</tissue>
    </source>
</reference>
<reference key="3">
    <citation type="journal article" date="2003" name="Nature">
        <title>The DNA sequence and analysis of human chromosome 14.</title>
        <authorList>
            <person name="Heilig R."/>
            <person name="Eckenberg R."/>
            <person name="Petit J.-L."/>
            <person name="Fonknechten N."/>
            <person name="Da Silva C."/>
            <person name="Cattolico L."/>
            <person name="Levy M."/>
            <person name="Barbe V."/>
            <person name="De Berardinis V."/>
            <person name="Ureta-Vidal A."/>
            <person name="Pelletier E."/>
            <person name="Vico V."/>
            <person name="Anthouard V."/>
            <person name="Rowen L."/>
            <person name="Madan A."/>
            <person name="Qin S."/>
            <person name="Sun H."/>
            <person name="Du H."/>
            <person name="Pepin K."/>
            <person name="Artiguenave F."/>
            <person name="Robert C."/>
            <person name="Cruaud C."/>
            <person name="Bruels T."/>
            <person name="Jaillon O."/>
            <person name="Friedlander L."/>
            <person name="Samson G."/>
            <person name="Brottier P."/>
            <person name="Cure S."/>
            <person name="Segurens B."/>
            <person name="Aniere F."/>
            <person name="Samain S."/>
            <person name="Crespeau H."/>
            <person name="Abbasi N."/>
            <person name="Aiach N."/>
            <person name="Boscus D."/>
            <person name="Dickhoff R."/>
            <person name="Dors M."/>
            <person name="Dubois I."/>
            <person name="Friedman C."/>
            <person name="Gouyvenoux M."/>
            <person name="James R."/>
            <person name="Madan A."/>
            <person name="Mairey-Estrada B."/>
            <person name="Mangenot S."/>
            <person name="Martins N."/>
            <person name="Menard M."/>
            <person name="Oztas S."/>
            <person name="Ratcliffe A."/>
            <person name="Shaffer T."/>
            <person name="Trask B."/>
            <person name="Vacherie B."/>
            <person name="Bellemere C."/>
            <person name="Belser C."/>
            <person name="Besnard-Gonnet M."/>
            <person name="Bartol-Mavel D."/>
            <person name="Boutard M."/>
            <person name="Briez-Silla S."/>
            <person name="Combette S."/>
            <person name="Dufosse-Laurent V."/>
            <person name="Ferron C."/>
            <person name="Lechaplais C."/>
            <person name="Louesse C."/>
            <person name="Muselet D."/>
            <person name="Magdelenat G."/>
            <person name="Pateau E."/>
            <person name="Petit E."/>
            <person name="Sirvain-Trukniewicz P."/>
            <person name="Trybou A."/>
            <person name="Vega-Czarny N."/>
            <person name="Bataille E."/>
            <person name="Bluet E."/>
            <person name="Bordelais I."/>
            <person name="Dubois M."/>
            <person name="Dumont C."/>
            <person name="Guerin T."/>
            <person name="Haffray S."/>
            <person name="Hammadi R."/>
            <person name="Muanga J."/>
            <person name="Pellouin V."/>
            <person name="Robert D."/>
            <person name="Wunderle E."/>
            <person name="Gauguet G."/>
            <person name="Roy A."/>
            <person name="Sainte-Marthe L."/>
            <person name="Verdier J."/>
            <person name="Verdier-Discala C."/>
            <person name="Hillier L.W."/>
            <person name="Fulton L."/>
            <person name="McPherson J."/>
            <person name="Matsuda F."/>
            <person name="Wilson R."/>
            <person name="Scarpelli C."/>
            <person name="Gyapay G."/>
            <person name="Wincker P."/>
            <person name="Saurin W."/>
            <person name="Quetier F."/>
            <person name="Waterston R."/>
            <person name="Hood L."/>
            <person name="Weissenbach J."/>
        </authorList>
    </citation>
    <scope>NUCLEOTIDE SEQUENCE [LARGE SCALE GENOMIC DNA]</scope>
</reference>
<reference key="4">
    <citation type="journal article" date="2004" name="Genome Res.">
        <title>The status, quality, and expansion of the NIH full-length cDNA project: the Mammalian Gene Collection (MGC).</title>
        <authorList>
            <consortium name="The MGC Project Team"/>
        </authorList>
    </citation>
    <scope>NUCLEOTIDE SEQUENCE [LARGE SCALE MRNA] (ISOFORM 2)</scope>
    <source>
        <tissue>Ovary</tissue>
    </source>
</reference>
<feature type="chain" id="PRO_0000089951" description="Protein FAM181A">
    <location>
        <begin position="1"/>
        <end position="354"/>
    </location>
</feature>
<feature type="region of interest" description="Disordered" evidence="1">
    <location>
        <begin position="1"/>
        <end position="35"/>
    </location>
</feature>
<feature type="region of interest" description="Disordered" evidence="1">
    <location>
        <begin position="117"/>
        <end position="160"/>
    </location>
</feature>
<feature type="region of interest" description="Disordered" evidence="1">
    <location>
        <begin position="172"/>
        <end position="193"/>
    </location>
</feature>
<feature type="compositionally biased region" description="Basic and acidic residues" evidence="1">
    <location>
        <begin position="1"/>
        <end position="14"/>
    </location>
</feature>
<feature type="compositionally biased region" description="Basic and acidic residues" evidence="1">
    <location>
        <begin position="129"/>
        <end position="142"/>
    </location>
</feature>
<feature type="splice variant" id="VSP_014549" description="In isoform 2." evidence="3 4 5">
    <location>
        <begin position="1"/>
        <end position="62"/>
    </location>
</feature>
<feature type="sequence variant" id="VAR_022834" description="In dbSNP:rs10141024." evidence="2">
    <original>A</original>
    <variation>T</variation>
    <location>
        <position position="28"/>
    </location>
</feature>
<feature type="sequence variant" id="VAR_057822" description="In dbSNP:rs34220325.">
    <original>L</original>
    <variation>M</variation>
    <location>
        <position position="162"/>
    </location>
</feature>
<feature type="sequence conflict" description="In Ref. 2; BAC04151." evidence="6" ref="2">
    <original>N</original>
    <variation>S</variation>
    <location>
        <position position="164"/>
    </location>
</feature>
<feature type="helix" evidence="7">
    <location>
        <begin position="192"/>
        <end position="194"/>
    </location>
</feature>
<feature type="helix" evidence="7">
    <location>
        <begin position="199"/>
        <end position="202"/>
    </location>
</feature>